<organism>
    <name type="scientific">Emericella nidulans (strain FGSC A4 / ATCC 38163 / CBS 112.46 / NRRL 194 / M139)</name>
    <name type="common">Aspergillus nidulans</name>
    <dbReference type="NCBI Taxonomy" id="227321"/>
    <lineage>
        <taxon>Eukaryota</taxon>
        <taxon>Fungi</taxon>
        <taxon>Dikarya</taxon>
        <taxon>Ascomycota</taxon>
        <taxon>Pezizomycotina</taxon>
        <taxon>Eurotiomycetes</taxon>
        <taxon>Eurotiomycetidae</taxon>
        <taxon>Eurotiales</taxon>
        <taxon>Aspergillaceae</taxon>
        <taxon>Aspergillus</taxon>
        <taxon>Aspergillus subgen. Nidulantes</taxon>
    </lineage>
</organism>
<proteinExistence type="evidence at protein level"/>
<accession>Q5AVZ1</accession>
<accession>C8VBM5</accession>
<keyword id="KW-0183">Conidiation</keyword>
<keyword id="KW-1015">Disulfide bond</keyword>
<keyword id="KW-1185">Reference proteome</keyword>
<keyword id="KW-0964">Secreted</keyword>
<keyword id="KW-0732">Signal</keyword>
<keyword id="KW-0749">Sporulation</keyword>
<gene>
    <name evidence="4" type="primary">dewE</name>
    <name type="ORF">ANIA_07539</name>
</gene>
<evidence type="ECO:0000250" key="1">
    <source>
        <dbReference type="UniProtKB" id="Q04571"/>
    </source>
</evidence>
<evidence type="ECO:0000255" key="2"/>
<evidence type="ECO:0000269" key="3">
    <source>
    </source>
</evidence>
<evidence type="ECO:0000303" key="4">
    <source>
    </source>
</evidence>
<evidence type="ECO:0000305" key="5"/>
<dbReference type="EMBL" id="BN001304">
    <property type="protein sequence ID" value="CBF79594.1"/>
    <property type="molecule type" value="Genomic_DNA"/>
</dbReference>
<dbReference type="RefSeq" id="XP_680808.1">
    <property type="nucleotide sequence ID" value="XM_675716.1"/>
</dbReference>
<dbReference type="STRING" id="227321.Q5AVZ1"/>
<dbReference type="EnsemblFungi" id="CBF79594">
    <property type="protein sequence ID" value="CBF79594"/>
    <property type="gene ID" value="ANIA_07539"/>
</dbReference>
<dbReference type="GeneID" id="2869526"/>
<dbReference type="KEGG" id="ani:ANIA_07539"/>
<dbReference type="VEuPathDB" id="FungiDB:AN7539"/>
<dbReference type="eggNOG" id="ENOG502RNV5">
    <property type="taxonomic scope" value="Eukaryota"/>
</dbReference>
<dbReference type="HOGENOM" id="CLU_2159235_0_0_1"/>
<dbReference type="InParanoid" id="Q5AVZ1"/>
<dbReference type="OMA" id="LCHPWTE"/>
<dbReference type="OrthoDB" id="4225815at2759"/>
<dbReference type="Proteomes" id="UP000000560">
    <property type="component" value="Chromosome IV"/>
</dbReference>
<dbReference type="GO" id="GO:0005576">
    <property type="term" value="C:extracellular region"/>
    <property type="evidence" value="ECO:0007669"/>
    <property type="project" value="UniProtKB-KW"/>
</dbReference>
<dbReference type="GO" id="GO:0009277">
    <property type="term" value="C:fungal-type cell wall"/>
    <property type="evidence" value="ECO:0007669"/>
    <property type="project" value="InterPro"/>
</dbReference>
<dbReference type="GO" id="GO:0005199">
    <property type="term" value="F:structural constituent of cell wall"/>
    <property type="evidence" value="ECO:0007669"/>
    <property type="project" value="InterPro"/>
</dbReference>
<dbReference type="CDD" id="cd23507">
    <property type="entry name" value="hydrophobin_I"/>
    <property type="match status" value="1"/>
</dbReference>
<dbReference type="InterPro" id="IPR001338">
    <property type="entry name" value="Hydrophobin"/>
</dbReference>
<dbReference type="Pfam" id="PF01185">
    <property type="entry name" value="Hydrophobin"/>
    <property type="match status" value="1"/>
</dbReference>
<name>DEWE_EMENI</name>
<feature type="signal peptide" evidence="2">
    <location>
        <begin position="1"/>
        <end position="20"/>
    </location>
</feature>
<feature type="chain" id="PRO_5013988761" description="Class I hydrophobin dewE">
    <location>
        <begin position="21"/>
        <end position="109"/>
    </location>
</feature>
<feature type="disulfide bond" evidence="1">
    <location>
        <begin position="34"/>
        <end position="87"/>
    </location>
</feature>
<feature type="disulfide bond" evidence="1">
    <location>
        <begin position="40"/>
        <end position="81"/>
    </location>
</feature>
<feature type="disulfide bond" evidence="1">
    <location>
        <begin position="41"/>
        <end position="74"/>
    </location>
</feature>
<feature type="disulfide bond" evidence="1">
    <location>
        <begin position="88"/>
        <end position="102"/>
    </location>
</feature>
<sequence>MKVATALSVLAVAGSALASALPSAANSEKRQSDCIGPLLCCGSLTTPLDPLVDPILELVGIDAAAIVGSVGLLCHAYDDTCTSEPQCCTEANLLGGTLGLGCGPLEHGH</sequence>
<protein>
    <recommendedName>
        <fullName evidence="4">Class I hydrophobin dewE</fullName>
    </recommendedName>
</protein>
<reference key="1">
    <citation type="journal article" date="2005" name="Nature">
        <title>Sequencing of Aspergillus nidulans and comparative analysis with A. fumigatus and A. oryzae.</title>
        <authorList>
            <person name="Galagan J.E."/>
            <person name="Calvo S.E."/>
            <person name="Cuomo C."/>
            <person name="Ma L.-J."/>
            <person name="Wortman J.R."/>
            <person name="Batzoglou S."/>
            <person name="Lee S.-I."/>
            <person name="Bastuerkmen M."/>
            <person name="Spevak C.C."/>
            <person name="Clutterbuck J."/>
            <person name="Kapitonov V."/>
            <person name="Jurka J."/>
            <person name="Scazzocchio C."/>
            <person name="Farman M.L."/>
            <person name="Butler J."/>
            <person name="Purcell S."/>
            <person name="Harris S."/>
            <person name="Braus G.H."/>
            <person name="Draht O."/>
            <person name="Busch S."/>
            <person name="D'Enfert C."/>
            <person name="Bouchier C."/>
            <person name="Goldman G.H."/>
            <person name="Bell-Pedersen D."/>
            <person name="Griffiths-Jones S."/>
            <person name="Doonan J.H."/>
            <person name="Yu J."/>
            <person name="Vienken K."/>
            <person name="Pain A."/>
            <person name="Freitag M."/>
            <person name="Selker E.U."/>
            <person name="Archer D.B."/>
            <person name="Penalva M.A."/>
            <person name="Oakley B.R."/>
            <person name="Momany M."/>
            <person name="Tanaka T."/>
            <person name="Kumagai T."/>
            <person name="Asai K."/>
            <person name="Machida M."/>
            <person name="Nierman W.C."/>
            <person name="Denning D.W."/>
            <person name="Caddick M.X."/>
            <person name="Hynes M."/>
            <person name="Paoletti M."/>
            <person name="Fischer R."/>
            <person name="Miller B.L."/>
            <person name="Dyer P.S."/>
            <person name="Sachs M.S."/>
            <person name="Osmani S.A."/>
            <person name="Birren B.W."/>
        </authorList>
    </citation>
    <scope>NUCLEOTIDE SEQUENCE [LARGE SCALE GENOMIC DNA]</scope>
    <source>
        <strain>FGSC A4 / ATCC 38163 / CBS 112.46 / NRRL 194 / M139</strain>
    </source>
</reference>
<reference key="2">
    <citation type="journal article" date="2009" name="Fungal Genet. Biol.">
        <title>The 2008 update of the Aspergillus nidulans genome annotation: a community effort.</title>
        <authorList>
            <person name="Wortman J.R."/>
            <person name="Gilsenan J.M."/>
            <person name="Joardar V."/>
            <person name="Deegan J."/>
            <person name="Clutterbuck J."/>
            <person name="Andersen M.R."/>
            <person name="Archer D."/>
            <person name="Bencina M."/>
            <person name="Braus G."/>
            <person name="Coutinho P."/>
            <person name="von Dohren H."/>
            <person name="Doonan J."/>
            <person name="Driessen A.J."/>
            <person name="Durek P."/>
            <person name="Espeso E."/>
            <person name="Fekete E."/>
            <person name="Flipphi M."/>
            <person name="Estrada C.G."/>
            <person name="Geysens S."/>
            <person name="Goldman G."/>
            <person name="de Groot P.W."/>
            <person name="Hansen K."/>
            <person name="Harris S.D."/>
            <person name="Heinekamp T."/>
            <person name="Helmstaedt K."/>
            <person name="Henrissat B."/>
            <person name="Hofmann G."/>
            <person name="Homan T."/>
            <person name="Horio T."/>
            <person name="Horiuchi H."/>
            <person name="James S."/>
            <person name="Jones M."/>
            <person name="Karaffa L."/>
            <person name="Karanyi Z."/>
            <person name="Kato M."/>
            <person name="Keller N."/>
            <person name="Kelly D.E."/>
            <person name="Kiel J.A."/>
            <person name="Kim J.M."/>
            <person name="van der Klei I.J."/>
            <person name="Klis F.M."/>
            <person name="Kovalchuk A."/>
            <person name="Krasevec N."/>
            <person name="Kubicek C.P."/>
            <person name="Liu B."/>
            <person name="Maccabe A."/>
            <person name="Meyer V."/>
            <person name="Mirabito P."/>
            <person name="Miskei M."/>
            <person name="Mos M."/>
            <person name="Mullins J."/>
            <person name="Nelson D.R."/>
            <person name="Nielsen J."/>
            <person name="Oakley B.R."/>
            <person name="Osmani S.A."/>
            <person name="Pakula T."/>
            <person name="Paszewski A."/>
            <person name="Paulsen I."/>
            <person name="Pilsyk S."/>
            <person name="Pocsi I."/>
            <person name="Punt P.J."/>
            <person name="Ram A.F."/>
            <person name="Ren Q."/>
            <person name="Robellet X."/>
            <person name="Robson G."/>
            <person name="Seiboth B."/>
            <person name="van Solingen P."/>
            <person name="Specht T."/>
            <person name="Sun J."/>
            <person name="Taheri-Talesh N."/>
            <person name="Takeshita N."/>
            <person name="Ussery D."/>
            <person name="vanKuyk P.A."/>
            <person name="Visser H."/>
            <person name="van de Vondervoort P.J."/>
            <person name="de Vries R.P."/>
            <person name="Walton J."/>
            <person name="Xiang X."/>
            <person name="Xiong Y."/>
            <person name="Zeng A.P."/>
            <person name="Brandt B.W."/>
            <person name="Cornell M.J."/>
            <person name="van den Hondel C.A."/>
            <person name="Visser J."/>
            <person name="Oliver S.G."/>
            <person name="Turner G."/>
        </authorList>
    </citation>
    <scope>GENOME REANNOTATION</scope>
    <source>
        <strain>FGSC A4 / ATCC 38163 / CBS 112.46 / NRRL 194 / M139</strain>
    </source>
</reference>
<reference key="3">
    <citation type="journal article" date="2014" name="PLoS ONE">
        <title>Six hydrophobins are involved in hydrophobin rodlet formation in Aspergillus nidulans and contribute to hydrophobicity of the spore surface.</title>
        <authorList>
            <person name="Gruenbacher A."/>
            <person name="Throm T."/>
            <person name="Seidel C."/>
            <person name="Gutt B."/>
            <person name="Roehrig J."/>
            <person name="Strunk T."/>
            <person name="Vincze P."/>
            <person name="Walheim S."/>
            <person name="Schimmel T."/>
            <person name="Wenzel W."/>
            <person name="Fischer R."/>
        </authorList>
    </citation>
    <scope>FUNCTION</scope>
    <scope>SUBUNIT</scope>
    <scope>INDUCTION</scope>
    <scope>SUBCELLULAR LOCATION</scope>
</reference>
<comment type="function">
    <text evidence="3 5">Aerial growth, conidiation, and dispersal of filamentous fungi in the environment rely upon a capability of their secreting small amphipathic proteins called hydrophobins (HPBs) with low sequence identity. Class I can self-assemble into an outermost layer of rodlet bundles on aerial cell surfaces, conferring cellular hydrophobicity that supports fungal growth, development and dispersal; whereas Class II form highly ordered films at water-air interfaces through intermolecular interactions but contribute nothing to the rodlet structure (Probable). DewE is a class I hydrophobin that contributes to the hydrophobicity of the spore surface (PubMed:24722460).</text>
</comment>
<comment type="subunit">
    <text evidence="3">Self-assembles to form functional amyloid fibrils called rodlets. Self-assembly into fibrillar rodlets occurs spontaneously at hydrophobic:hydrophilic interfaces and the rodlets further associate laterally to form amphipathic monolayers.</text>
</comment>
<comment type="subcellular location">
    <subcellularLocation>
        <location evidence="3">Secreted</location>
    </subcellularLocation>
    <subcellularLocation>
        <location evidence="3">Spore wall</location>
    </subcellularLocation>
</comment>
<comment type="induction">
    <text evidence="3">Highly expressed after post induction of asexual development with a decrease after a peak at 6 h post induction (PubMed:24722460). Expressed in vegetative hyphae (PubMed:24722460).</text>
</comment>
<comment type="similarity">
    <text evidence="5">Belongs to the fungal hydrophobin family.</text>
</comment>